<name>GFA_BRASB</name>
<sequence>MTVHIHPYVDNGVKQGSGHFAGGTLVCKCHDRPVKVAVKGDVAHNHACGCTKCWKPSGATFSVIAVVPRQNVTVLENGDKLKIVDPSAVIQRYACTGCGTHMYGRIENTGHPFYGLDFIHPELFQEQGSAAPAFAAFVSSVIESGVKPEQMGEIRARLKELGLEPYDCLSPALMDAIATHVAKAKAA</sequence>
<protein>
    <recommendedName>
        <fullName evidence="1">Glutathione-dependent formaldehyde-activating enzyme</fullName>
        <ecNumber evidence="1">4.4.1.22</ecNumber>
    </recommendedName>
    <alternativeName>
        <fullName evidence="1">S-(hydroxymethyl)glutathione synthase</fullName>
    </alternativeName>
</protein>
<proteinExistence type="inferred from homology"/>
<reference key="1">
    <citation type="journal article" date="2007" name="Science">
        <title>Legumes symbioses: absence of nod genes in photosynthetic bradyrhizobia.</title>
        <authorList>
            <person name="Giraud E."/>
            <person name="Moulin L."/>
            <person name="Vallenet D."/>
            <person name="Barbe V."/>
            <person name="Cytryn E."/>
            <person name="Avarre J.-C."/>
            <person name="Jaubert M."/>
            <person name="Simon D."/>
            <person name="Cartieaux F."/>
            <person name="Prin Y."/>
            <person name="Bena G."/>
            <person name="Hannibal L."/>
            <person name="Fardoux J."/>
            <person name="Kojadinovic M."/>
            <person name="Vuillet L."/>
            <person name="Lajus A."/>
            <person name="Cruveiller S."/>
            <person name="Rouy Z."/>
            <person name="Mangenot S."/>
            <person name="Segurens B."/>
            <person name="Dossat C."/>
            <person name="Franck W.L."/>
            <person name="Chang W.-S."/>
            <person name="Saunders E."/>
            <person name="Bruce D."/>
            <person name="Richardson P."/>
            <person name="Normand P."/>
            <person name="Dreyfus B."/>
            <person name="Pignol D."/>
            <person name="Stacey G."/>
            <person name="Emerich D."/>
            <person name="Vermeglio A."/>
            <person name="Medigue C."/>
            <person name="Sadowsky M."/>
        </authorList>
    </citation>
    <scope>NUCLEOTIDE SEQUENCE [LARGE SCALE GENOMIC DNA]</scope>
    <source>
        <strain>BTAi1 / ATCC BAA-1182</strain>
    </source>
</reference>
<organism>
    <name type="scientific">Bradyrhizobium sp. (strain BTAi1 / ATCC BAA-1182)</name>
    <dbReference type="NCBI Taxonomy" id="288000"/>
    <lineage>
        <taxon>Bacteria</taxon>
        <taxon>Pseudomonadati</taxon>
        <taxon>Pseudomonadota</taxon>
        <taxon>Alphaproteobacteria</taxon>
        <taxon>Hyphomicrobiales</taxon>
        <taxon>Nitrobacteraceae</taxon>
        <taxon>Bradyrhizobium</taxon>
    </lineage>
</organism>
<accession>A5EP16</accession>
<feature type="chain" id="PRO_1000045836" description="Glutathione-dependent formaldehyde-activating enzyme">
    <location>
        <begin position="1"/>
        <end position="187"/>
    </location>
</feature>
<feature type="domain" description="CENP-V/GFA" evidence="2">
    <location>
        <begin position="20"/>
        <end position="167"/>
    </location>
</feature>
<feature type="binding site" evidence="1 2">
    <location>
        <position position="27"/>
    </location>
    <ligand>
        <name>Zn(2+)</name>
        <dbReference type="ChEBI" id="CHEBI:29105"/>
        <label>1</label>
        <note>structural</note>
    </ligand>
</feature>
<feature type="binding site" evidence="1 2">
    <location>
        <position position="29"/>
    </location>
    <ligand>
        <name>Zn(2+)</name>
        <dbReference type="ChEBI" id="CHEBI:29105"/>
        <label>1</label>
        <note>structural</note>
    </ligand>
</feature>
<feature type="binding site" evidence="1 2">
    <location>
        <position position="48"/>
    </location>
    <ligand>
        <name>Zn(2+)</name>
        <dbReference type="ChEBI" id="CHEBI:29105"/>
        <label>2</label>
        <note>catalytic</note>
    </ligand>
</feature>
<feature type="binding site" evidence="1 2">
    <location>
        <position position="50"/>
    </location>
    <ligand>
        <name>Zn(2+)</name>
        <dbReference type="ChEBI" id="CHEBI:29105"/>
        <label>2</label>
        <note>catalytic</note>
    </ligand>
</feature>
<feature type="binding site" evidence="1 2">
    <location>
        <position position="53"/>
    </location>
    <ligand>
        <name>Zn(2+)</name>
        <dbReference type="ChEBI" id="CHEBI:29105"/>
        <label>2</label>
        <note>catalytic</note>
    </ligand>
</feature>
<feature type="binding site" evidence="1 2">
    <location>
        <position position="95"/>
    </location>
    <ligand>
        <name>Zn(2+)</name>
        <dbReference type="ChEBI" id="CHEBI:29105"/>
        <label>1</label>
        <note>structural</note>
    </ligand>
</feature>
<feature type="binding site" evidence="1 2">
    <location>
        <position position="98"/>
    </location>
    <ligand>
        <name>Zn(2+)</name>
        <dbReference type="ChEBI" id="CHEBI:29105"/>
        <label>1</label>
        <note>structural</note>
    </ligand>
</feature>
<comment type="function">
    <text evidence="1">Catalyzes the condensation of formaldehyde and glutathione to S-hydroxymethylglutathione.</text>
</comment>
<comment type="catalytic activity">
    <reaction evidence="1">
        <text>S-(hydroxymethyl)glutathione = glutathione + formaldehyde</text>
        <dbReference type="Rhea" id="RHEA:22488"/>
        <dbReference type="ChEBI" id="CHEBI:16842"/>
        <dbReference type="ChEBI" id="CHEBI:57925"/>
        <dbReference type="ChEBI" id="CHEBI:58758"/>
        <dbReference type="EC" id="4.4.1.22"/>
    </reaction>
</comment>
<comment type="cofactor">
    <cofactor evidence="1 2">
        <name>Zn(2+)</name>
        <dbReference type="ChEBI" id="CHEBI:29105"/>
    </cofactor>
    <text evidence="1 2">Binds 2 Zn(2+) ions per subunit.</text>
</comment>
<comment type="pathway">
    <text evidence="1">One-carbon metabolism; formaldehyde degradation; formate from formaldehyde (glutathione route): step 1/3.</text>
</comment>
<comment type="similarity">
    <text evidence="1">Belongs to the Gfa family.</text>
</comment>
<gene>
    <name evidence="1" type="primary">gfa</name>
    <name type="ordered locus">BBta_5971</name>
</gene>
<dbReference type="EC" id="4.4.1.22" evidence="1"/>
<dbReference type="EMBL" id="CP000494">
    <property type="protein sequence ID" value="ABQ37910.1"/>
    <property type="molecule type" value="Genomic_DNA"/>
</dbReference>
<dbReference type="RefSeq" id="WP_012045861.1">
    <property type="nucleotide sequence ID" value="NC_009485.1"/>
</dbReference>
<dbReference type="SMR" id="A5EP16"/>
<dbReference type="STRING" id="288000.BBta_5971"/>
<dbReference type="KEGG" id="bbt:BBta_5971"/>
<dbReference type="eggNOG" id="COG3791">
    <property type="taxonomic scope" value="Bacteria"/>
</dbReference>
<dbReference type="HOGENOM" id="CLU_090716_0_0_5"/>
<dbReference type="OrthoDB" id="9011205at2"/>
<dbReference type="UniPathway" id="UPA00562">
    <property type="reaction ID" value="UER00621"/>
</dbReference>
<dbReference type="Proteomes" id="UP000000246">
    <property type="component" value="Chromosome"/>
</dbReference>
<dbReference type="GO" id="GO:0051907">
    <property type="term" value="F:S-(hydroxymethyl)glutathione synthase activity"/>
    <property type="evidence" value="ECO:0007669"/>
    <property type="project" value="UniProtKB-UniRule"/>
</dbReference>
<dbReference type="GO" id="GO:0008270">
    <property type="term" value="F:zinc ion binding"/>
    <property type="evidence" value="ECO:0007669"/>
    <property type="project" value="UniProtKB-UniRule"/>
</dbReference>
<dbReference type="GO" id="GO:0046294">
    <property type="term" value="P:formaldehyde catabolic process"/>
    <property type="evidence" value="ECO:0007669"/>
    <property type="project" value="UniProtKB-UniRule"/>
</dbReference>
<dbReference type="Gene3D" id="3.90.1590.10">
    <property type="entry name" value="glutathione-dependent formaldehyde- activating enzyme (gfa)"/>
    <property type="match status" value="1"/>
</dbReference>
<dbReference type="HAMAP" id="MF_00723">
    <property type="entry name" value="Formald_GSH"/>
    <property type="match status" value="1"/>
</dbReference>
<dbReference type="InterPro" id="IPR006913">
    <property type="entry name" value="CENP-V/GFA"/>
</dbReference>
<dbReference type="InterPro" id="IPR014185">
    <property type="entry name" value="Formald_GSH"/>
</dbReference>
<dbReference type="InterPro" id="IPR011057">
    <property type="entry name" value="Mss4-like_sf"/>
</dbReference>
<dbReference type="NCBIfam" id="TIGR02820">
    <property type="entry name" value="formald_GSH"/>
    <property type="match status" value="1"/>
</dbReference>
<dbReference type="NCBIfam" id="NF003829">
    <property type="entry name" value="PRK05417.1"/>
    <property type="match status" value="1"/>
</dbReference>
<dbReference type="PANTHER" id="PTHR33337:SF40">
    <property type="entry name" value="CENP-V_GFA DOMAIN-CONTAINING PROTEIN-RELATED"/>
    <property type="match status" value="1"/>
</dbReference>
<dbReference type="PANTHER" id="PTHR33337">
    <property type="entry name" value="GFA DOMAIN-CONTAINING PROTEIN"/>
    <property type="match status" value="1"/>
</dbReference>
<dbReference type="Pfam" id="PF04828">
    <property type="entry name" value="GFA"/>
    <property type="match status" value="1"/>
</dbReference>
<dbReference type="PIRSF" id="PIRSF033318">
    <property type="entry name" value="Formald_GSH"/>
    <property type="match status" value="1"/>
</dbReference>
<dbReference type="SUPFAM" id="SSF51316">
    <property type="entry name" value="Mss4-like"/>
    <property type="match status" value="1"/>
</dbReference>
<dbReference type="PROSITE" id="PS51891">
    <property type="entry name" value="CENP_V_GFA"/>
    <property type="match status" value="1"/>
</dbReference>
<keyword id="KW-0456">Lyase</keyword>
<keyword id="KW-0479">Metal-binding</keyword>
<keyword id="KW-1185">Reference proteome</keyword>
<keyword id="KW-0862">Zinc</keyword>
<evidence type="ECO:0000255" key="1">
    <source>
        <dbReference type="HAMAP-Rule" id="MF_00723"/>
    </source>
</evidence>
<evidence type="ECO:0000255" key="2">
    <source>
        <dbReference type="PROSITE-ProRule" id="PRU01239"/>
    </source>
</evidence>